<reference key="1">
    <citation type="journal article" date="1998" name="FEBS Lett.">
        <title>Characterization of a gene encoding an abscisic acid-inducible type-2 lipid transfer protein from rice.</title>
        <authorList>
            <person name="Garcia-Garrido J.M."/>
            <person name="Menossi M."/>
            <person name="Puigdomenech P."/>
            <person name="Martinez-Izquierdo J.A."/>
            <person name="Delseny M."/>
        </authorList>
    </citation>
    <scope>NUCLEOTIDE SEQUENCE [GENOMIC DNA]</scope>
    <source>
        <strain>cv. IR36</strain>
    </source>
</reference>
<reference key="2">
    <citation type="journal article" date="2005" name="PLoS Biol.">
        <title>The genomes of Oryza sativa: a history of duplications.</title>
        <authorList>
            <person name="Yu J."/>
            <person name="Wang J."/>
            <person name="Lin W."/>
            <person name="Li S."/>
            <person name="Li H."/>
            <person name="Zhou J."/>
            <person name="Ni P."/>
            <person name="Dong W."/>
            <person name="Hu S."/>
            <person name="Zeng C."/>
            <person name="Zhang J."/>
            <person name="Zhang Y."/>
            <person name="Li R."/>
            <person name="Xu Z."/>
            <person name="Li S."/>
            <person name="Li X."/>
            <person name="Zheng H."/>
            <person name="Cong L."/>
            <person name="Lin L."/>
            <person name="Yin J."/>
            <person name="Geng J."/>
            <person name="Li G."/>
            <person name="Shi J."/>
            <person name="Liu J."/>
            <person name="Lv H."/>
            <person name="Li J."/>
            <person name="Wang J."/>
            <person name="Deng Y."/>
            <person name="Ran L."/>
            <person name="Shi X."/>
            <person name="Wang X."/>
            <person name="Wu Q."/>
            <person name="Li C."/>
            <person name="Ren X."/>
            <person name="Wang J."/>
            <person name="Wang X."/>
            <person name="Li D."/>
            <person name="Liu D."/>
            <person name="Zhang X."/>
            <person name="Ji Z."/>
            <person name="Zhao W."/>
            <person name="Sun Y."/>
            <person name="Zhang Z."/>
            <person name="Bao J."/>
            <person name="Han Y."/>
            <person name="Dong L."/>
            <person name="Ji J."/>
            <person name="Chen P."/>
            <person name="Wu S."/>
            <person name="Liu J."/>
            <person name="Xiao Y."/>
            <person name="Bu D."/>
            <person name="Tan J."/>
            <person name="Yang L."/>
            <person name="Ye C."/>
            <person name="Zhang J."/>
            <person name="Xu J."/>
            <person name="Zhou Y."/>
            <person name="Yu Y."/>
            <person name="Zhang B."/>
            <person name="Zhuang S."/>
            <person name="Wei H."/>
            <person name="Liu B."/>
            <person name="Lei M."/>
            <person name="Yu H."/>
            <person name="Li Y."/>
            <person name="Xu H."/>
            <person name="Wei S."/>
            <person name="He X."/>
            <person name="Fang L."/>
            <person name="Zhang Z."/>
            <person name="Zhang Y."/>
            <person name="Huang X."/>
            <person name="Su Z."/>
            <person name="Tong W."/>
            <person name="Li J."/>
            <person name="Tong Z."/>
            <person name="Li S."/>
            <person name="Ye J."/>
            <person name="Wang L."/>
            <person name="Fang L."/>
            <person name="Lei T."/>
            <person name="Chen C.-S."/>
            <person name="Chen H.-C."/>
            <person name="Xu Z."/>
            <person name="Li H."/>
            <person name="Huang H."/>
            <person name="Zhang F."/>
            <person name="Xu H."/>
            <person name="Li N."/>
            <person name="Zhao C."/>
            <person name="Li S."/>
            <person name="Dong L."/>
            <person name="Huang Y."/>
            <person name="Li L."/>
            <person name="Xi Y."/>
            <person name="Qi Q."/>
            <person name="Li W."/>
            <person name="Zhang B."/>
            <person name="Hu W."/>
            <person name="Zhang Y."/>
            <person name="Tian X."/>
            <person name="Jiao Y."/>
            <person name="Liang X."/>
            <person name="Jin J."/>
            <person name="Gao L."/>
            <person name="Zheng W."/>
            <person name="Hao B."/>
            <person name="Liu S.-M."/>
            <person name="Wang W."/>
            <person name="Yuan L."/>
            <person name="Cao M."/>
            <person name="McDermott J."/>
            <person name="Samudrala R."/>
            <person name="Wang J."/>
            <person name="Wong G.K.-S."/>
            <person name="Yang H."/>
        </authorList>
    </citation>
    <scope>NUCLEOTIDE SEQUENCE [LARGE SCALE GENOMIC DNA]</scope>
    <source>
        <strain>cv. 93-11</strain>
    </source>
</reference>
<gene>
    <name type="primary">LTP-2</name>
    <name type="ORF">OsI_009478</name>
</gene>
<protein>
    <recommendedName>
        <fullName>Non-specific lipid-transfer protein 2</fullName>
        <shortName>nsLTP2</shortName>
    </recommendedName>
    <alternativeName>
        <fullName>7 kDa lipid transfer protein</fullName>
    </alternativeName>
</protein>
<keyword id="KW-1015">Disulfide bond</keyword>
<keyword id="KW-0446">Lipid-binding</keyword>
<keyword id="KW-1185">Reference proteome</keyword>
<keyword id="KW-0732">Signal</keyword>
<keyword id="KW-0813">Transport</keyword>
<accession>A2XBN5</accession>
<accession>P83210</accession>
<accession>Q40631</accession>
<dbReference type="EMBL" id="U16721">
    <property type="protein sequence ID" value="AAC50030.1"/>
    <property type="molecule type" value="Genomic_DNA"/>
</dbReference>
<dbReference type="EMBL" id="CM000128">
    <property type="protein sequence ID" value="EAY88245.1"/>
    <property type="status" value="ALT_INIT"/>
    <property type="molecule type" value="Genomic_DNA"/>
</dbReference>
<dbReference type="PIR" id="T03290">
    <property type="entry name" value="T03290"/>
</dbReference>
<dbReference type="BMRB" id="A2XBN5"/>
<dbReference type="SMR" id="A2XBN5"/>
<dbReference type="STRING" id="39946.A2XBN5"/>
<dbReference type="EnsemblPlants" id="OsGoSa_03g0001010.01">
    <property type="protein sequence ID" value="OsGoSa_03g0001010.01"/>
    <property type="gene ID" value="OsGoSa_03g0001010"/>
</dbReference>
<dbReference type="EnsemblPlants" id="OsKYG_03g0001060.01">
    <property type="protein sequence ID" value="OsKYG_03g0001060.01"/>
    <property type="gene ID" value="OsKYG_03g0001060"/>
</dbReference>
<dbReference type="EnsemblPlants" id="OsLaMu_03g0001030.01">
    <property type="protein sequence ID" value="OsLaMu_03g0001030.01"/>
    <property type="gene ID" value="OsLaMu_03g0001030"/>
</dbReference>
<dbReference type="EnsemblPlants" id="OsLima_03g0001040.01">
    <property type="protein sequence ID" value="OsLima_03g0001040.01"/>
    <property type="gene ID" value="OsLima_03g0001040"/>
</dbReference>
<dbReference type="EnsemblPlants" id="OsLiXu_03g0001020.01">
    <property type="protein sequence ID" value="OsLiXu_03g0001020.01"/>
    <property type="gene ID" value="OsLiXu_03g0001020"/>
</dbReference>
<dbReference type="EnsemblPlants" id="OsMH63_03G001010_01">
    <property type="protein sequence ID" value="OsMH63_03G001010_01"/>
    <property type="gene ID" value="OsMH63_03G001010"/>
</dbReference>
<dbReference type="EnsemblPlants" id="OsPr106_03g0001010.01">
    <property type="protein sequence ID" value="OsPr106_03g0001010.01"/>
    <property type="gene ID" value="OsPr106_03g0001010"/>
</dbReference>
<dbReference type="EnsemblPlants" id="OsZS97_03G001020_01">
    <property type="protein sequence ID" value="OsZS97_03G001020_01"/>
    <property type="gene ID" value="OsZS97_03G001020"/>
</dbReference>
<dbReference type="Gramene" id="OsGoSa_03g0001010.01">
    <property type="protein sequence ID" value="OsGoSa_03g0001010.01"/>
    <property type="gene ID" value="OsGoSa_03g0001010"/>
</dbReference>
<dbReference type="Gramene" id="OsKYG_03g0001060.01">
    <property type="protein sequence ID" value="OsKYG_03g0001060.01"/>
    <property type="gene ID" value="OsKYG_03g0001060"/>
</dbReference>
<dbReference type="Gramene" id="OsLaMu_03g0001030.01">
    <property type="protein sequence ID" value="OsLaMu_03g0001030.01"/>
    <property type="gene ID" value="OsLaMu_03g0001030"/>
</dbReference>
<dbReference type="Gramene" id="OsLima_03g0001040.01">
    <property type="protein sequence ID" value="OsLima_03g0001040.01"/>
    <property type="gene ID" value="OsLima_03g0001040"/>
</dbReference>
<dbReference type="Gramene" id="OsLiXu_03g0001020.01">
    <property type="protein sequence ID" value="OsLiXu_03g0001020.01"/>
    <property type="gene ID" value="OsLiXu_03g0001020"/>
</dbReference>
<dbReference type="Gramene" id="OsMH63_03G001010_01">
    <property type="protein sequence ID" value="OsMH63_03G001010_01"/>
    <property type="gene ID" value="OsMH63_03G001010"/>
</dbReference>
<dbReference type="Gramene" id="OsPr106_03g0001010.01">
    <property type="protein sequence ID" value="OsPr106_03g0001010.01"/>
    <property type="gene ID" value="OsPr106_03g0001010"/>
</dbReference>
<dbReference type="Gramene" id="OsZS97_03G001020_01">
    <property type="protein sequence ID" value="OsZS97_03G001020_01"/>
    <property type="gene ID" value="OsZS97_03G001020"/>
</dbReference>
<dbReference type="HOGENOM" id="CLU_158223_2_0_1"/>
<dbReference type="OrthoDB" id="665742at2759"/>
<dbReference type="Proteomes" id="UP000007015">
    <property type="component" value="Chromosome 3"/>
</dbReference>
<dbReference type="GO" id="GO:0008289">
    <property type="term" value="F:lipid binding"/>
    <property type="evidence" value="ECO:0007669"/>
    <property type="project" value="UniProtKB-KW"/>
</dbReference>
<dbReference type="GO" id="GO:0006869">
    <property type="term" value="P:lipid transport"/>
    <property type="evidence" value="ECO:0007669"/>
    <property type="project" value="InterPro"/>
</dbReference>
<dbReference type="CDD" id="cd01959">
    <property type="entry name" value="nsLTP2"/>
    <property type="match status" value="1"/>
</dbReference>
<dbReference type="Gene3D" id="1.10.110.10">
    <property type="entry name" value="Plant lipid-transfer and hydrophobic proteins"/>
    <property type="match status" value="1"/>
</dbReference>
<dbReference type="InterPro" id="IPR036312">
    <property type="entry name" value="Bifun_inhib/LTP/seed_sf"/>
</dbReference>
<dbReference type="InterPro" id="IPR016140">
    <property type="entry name" value="Bifunc_inhib/LTP/seed_store"/>
</dbReference>
<dbReference type="InterPro" id="IPR033872">
    <property type="entry name" value="nsLTP2"/>
</dbReference>
<dbReference type="PANTHER" id="PTHR33214">
    <property type="entry name" value="BIFUNCTIONAL INHIBITOR/LIPID-TRANSFER PROTEIN/SEED STORAGE 2S ALBUMIN SUPERFAMILY PROTEIN"/>
    <property type="match status" value="1"/>
</dbReference>
<dbReference type="PANTHER" id="PTHR33214:SF34">
    <property type="entry name" value="NON-SPECIFIC LIPID-TRANSFER PROTEIN 2"/>
    <property type="match status" value="1"/>
</dbReference>
<dbReference type="Pfam" id="PF00234">
    <property type="entry name" value="Tryp_alpha_amyl"/>
    <property type="match status" value="1"/>
</dbReference>
<dbReference type="SUPFAM" id="SSF47699">
    <property type="entry name" value="Bifunctional inhibitor/lipid-transfer protein/seed storage 2S albumin"/>
    <property type="match status" value="1"/>
</dbReference>
<proteinExistence type="inferred from homology"/>
<comment type="function">
    <text>Transfer lipids across membranes. May play a role in plant defense or in the biosynthesis of cuticle layers.</text>
</comment>
<comment type="similarity">
    <text evidence="2">Belongs to the plant LTP family. B11E subfamily.</text>
</comment>
<comment type="sequence caution" evidence="2">
    <conflict type="erroneous initiation">
        <sequence resource="EMBL-CDS" id="EAY88245"/>
    </conflict>
</comment>
<evidence type="ECO:0000250" key="1"/>
<evidence type="ECO:0000305" key="2"/>
<organism>
    <name type="scientific">Oryza sativa subsp. indica</name>
    <name type="common">Rice</name>
    <dbReference type="NCBI Taxonomy" id="39946"/>
    <lineage>
        <taxon>Eukaryota</taxon>
        <taxon>Viridiplantae</taxon>
        <taxon>Streptophyta</taxon>
        <taxon>Embryophyta</taxon>
        <taxon>Tracheophyta</taxon>
        <taxon>Spermatophyta</taxon>
        <taxon>Magnoliopsida</taxon>
        <taxon>Liliopsida</taxon>
        <taxon>Poales</taxon>
        <taxon>Poaceae</taxon>
        <taxon>BOP clade</taxon>
        <taxon>Oryzoideae</taxon>
        <taxon>Oryzeae</taxon>
        <taxon>Oryzinae</taxon>
        <taxon>Oryza</taxon>
        <taxon>Oryza sativa</taxon>
    </lineage>
</organism>
<sequence length="96" mass="9563">MMRRLAVLVLAVAMVAACGGGVVGVAGASCNAGQLTVCAGAIAGGARPTAACCSSLRAQQGCFCQFAKDPRYGRYVNSPNARKAVSSCGIALPTCH</sequence>
<feature type="signal peptide" evidence="1">
    <location>
        <begin position="1"/>
        <end position="27"/>
    </location>
</feature>
<feature type="chain" id="PRO_0000296254" description="Non-specific lipid-transfer protein 2">
    <location>
        <begin position="28"/>
        <end position="96"/>
    </location>
</feature>
<feature type="disulfide bond" evidence="1">
    <location>
        <begin position="30"/>
        <end position="62"/>
    </location>
</feature>
<feature type="disulfide bond" evidence="1">
    <location>
        <begin position="38"/>
        <end position="52"/>
    </location>
</feature>
<feature type="disulfide bond" evidence="1">
    <location>
        <begin position="53"/>
        <end position="88"/>
    </location>
</feature>
<feature type="disulfide bond" evidence="1">
    <location>
        <begin position="64"/>
        <end position="95"/>
    </location>
</feature>
<feature type="sequence conflict" description="In Ref. 1; AAC50030." evidence="2" ref="1">
    <original>R</original>
    <variation>K</variation>
    <location>
        <position position="4"/>
    </location>
</feature>
<feature type="sequence conflict" description="In Ref. 1; AAC50030." evidence="2" ref="1">
    <original>G</original>
    <variation>A</variation>
    <location>
        <position position="40"/>
    </location>
</feature>
<feature type="sequence conflict" description="In Ref. 1; AAC50030." evidence="2" ref="1">
    <original>S</original>
    <variation>N</variation>
    <location>
        <position position="78"/>
    </location>
</feature>
<feature type="sequence conflict" description="In Ref. 1; AAC50030." evidence="2" ref="1">
    <original>A</original>
    <variation>T</variation>
    <location>
        <position position="84"/>
    </location>
</feature>
<name>NLTPX_ORYSI</name>